<dbReference type="EC" id="6.3.5.3" evidence="1"/>
<dbReference type="EC" id="3.5.1.2" evidence="1"/>
<dbReference type="EMBL" id="CP000110">
    <property type="protein sequence ID" value="ABB35598.1"/>
    <property type="molecule type" value="Genomic_DNA"/>
</dbReference>
<dbReference type="RefSeq" id="WP_011364807.1">
    <property type="nucleotide sequence ID" value="NC_007516.1"/>
</dbReference>
<dbReference type="SMR" id="Q3AII4"/>
<dbReference type="STRING" id="110662.Syncc9605_1853"/>
<dbReference type="KEGG" id="syd:Syncc9605_1853"/>
<dbReference type="eggNOG" id="COG0047">
    <property type="taxonomic scope" value="Bacteria"/>
</dbReference>
<dbReference type="HOGENOM" id="CLU_001031_3_1_3"/>
<dbReference type="OrthoDB" id="9804441at2"/>
<dbReference type="UniPathway" id="UPA00074">
    <property type="reaction ID" value="UER00128"/>
</dbReference>
<dbReference type="GO" id="GO:0005737">
    <property type="term" value="C:cytoplasm"/>
    <property type="evidence" value="ECO:0007669"/>
    <property type="project" value="UniProtKB-SubCell"/>
</dbReference>
<dbReference type="GO" id="GO:0005524">
    <property type="term" value="F:ATP binding"/>
    <property type="evidence" value="ECO:0007669"/>
    <property type="project" value="UniProtKB-KW"/>
</dbReference>
<dbReference type="GO" id="GO:0004359">
    <property type="term" value="F:glutaminase activity"/>
    <property type="evidence" value="ECO:0007669"/>
    <property type="project" value="UniProtKB-EC"/>
</dbReference>
<dbReference type="GO" id="GO:0004642">
    <property type="term" value="F:phosphoribosylformylglycinamidine synthase activity"/>
    <property type="evidence" value="ECO:0007669"/>
    <property type="project" value="UniProtKB-UniRule"/>
</dbReference>
<dbReference type="GO" id="GO:0006189">
    <property type="term" value="P:'de novo' IMP biosynthetic process"/>
    <property type="evidence" value="ECO:0007669"/>
    <property type="project" value="UniProtKB-UniRule"/>
</dbReference>
<dbReference type="CDD" id="cd01740">
    <property type="entry name" value="GATase1_FGAR_AT"/>
    <property type="match status" value="1"/>
</dbReference>
<dbReference type="Gene3D" id="3.40.50.880">
    <property type="match status" value="1"/>
</dbReference>
<dbReference type="HAMAP" id="MF_00421">
    <property type="entry name" value="PurQ"/>
    <property type="match status" value="1"/>
</dbReference>
<dbReference type="InterPro" id="IPR029062">
    <property type="entry name" value="Class_I_gatase-like"/>
</dbReference>
<dbReference type="InterPro" id="IPR010075">
    <property type="entry name" value="PRibForGlyAmidine_synth_PurQ"/>
</dbReference>
<dbReference type="NCBIfam" id="TIGR01737">
    <property type="entry name" value="FGAM_synth_I"/>
    <property type="match status" value="1"/>
</dbReference>
<dbReference type="NCBIfam" id="NF002957">
    <property type="entry name" value="PRK03619.1"/>
    <property type="match status" value="1"/>
</dbReference>
<dbReference type="PANTHER" id="PTHR47552">
    <property type="entry name" value="PHOSPHORIBOSYLFORMYLGLYCINAMIDINE SYNTHASE SUBUNIT PURQ"/>
    <property type="match status" value="1"/>
</dbReference>
<dbReference type="PANTHER" id="PTHR47552:SF1">
    <property type="entry name" value="PHOSPHORIBOSYLFORMYLGLYCINAMIDINE SYNTHASE SUBUNIT PURQ"/>
    <property type="match status" value="1"/>
</dbReference>
<dbReference type="Pfam" id="PF13507">
    <property type="entry name" value="GATase_5"/>
    <property type="match status" value="1"/>
</dbReference>
<dbReference type="PIRSF" id="PIRSF001586">
    <property type="entry name" value="FGAM_synth_I"/>
    <property type="match status" value="1"/>
</dbReference>
<dbReference type="SMART" id="SM01211">
    <property type="entry name" value="GATase_5"/>
    <property type="match status" value="1"/>
</dbReference>
<dbReference type="SUPFAM" id="SSF52317">
    <property type="entry name" value="Class I glutamine amidotransferase-like"/>
    <property type="match status" value="1"/>
</dbReference>
<dbReference type="PROSITE" id="PS51273">
    <property type="entry name" value="GATASE_TYPE_1"/>
    <property type="match status" value="1"/>
</dbReference>
<reference key="1">
    <citation type="submission" date="2005-07" db="EMBL/GenBank/DDBJ databases">
        <title>Complete sequence of Synechococcus sp. CC9605.</title>
        <authorList>
            <consortium name="US DOE Joint Genome Institute"/>
            <person name="Copeland A."/>
            <person name="Lucas S."/>
            <person name="Lapidus A."/>
            <person name="Barry K."/>
            <person name="Detter J.C."/>
            <person name="Glavina T."/>
            <person name="Hammon N."/>
            <person name="Israni S."/>
            <person name="Pitluck S."/>
            <person name="Schmutz J."/>
            <person name="Martinez M."/>
            <person name="Larimer F."/>
            <person name="Land M."/>
            <person name="Kyrpides N."/>
            <person name="Ivanova N."/>
            <person name="Richardson P."/>
        </authorList>
    </citation>
    <scope>NUCLEOTIDE SEQUENCE [LARGE SCALE GENOMIC DNA]</scope>
    <source>
        <strain>CC9605</strain>
    </source>
</reference>
<proteinExistence type="inferred from homology"/>
<gene>
    <name evidence="1" type="primary">purQ</name>
    <name type="ordered locus">Syncc9605_1853</name>
</gene>
<keyword id="KW-0067">ATP-binding</keyword>
<keyword id="KW-0963">Cytoplasm</keyword>
<keyword id="KW-0315">Glutamine amidotransferase</keyword>
<keyword id="KW-0378">Hydrolase</keyword>
<keyword id="KW-0436">Ligase</keyword>
<keyword id="KW-0547">Nucleotide-binding</keyword>
<keyword id="KW-0658">Purine biosynthesis</keyword>
<accession>Q3AII4</accession>
<protein>
    <recommendedName>
        <fullName evidence="1">Phosphoribosylformylglycinamidine synthase subunit PurQ</fullName>
        <shortName evidence="1">FGAM synthase</shortName>
        <ecNumber evidence="1">6.3.5.3</ecNumber>
    </recommendedName>
    <alternativeName>
        <fullName evidence="1">Formylglycinamide ribonucleotide amidotransferase subunit I</fullName>
        <shortName evidence="1">FGAR amidotransferase I</shortName>
        <shortName evidence="1">FGAR-AT I</shortName>
    </alternativeName>
    <alternativeName>
        <fullName evidence="1">Glutaminase PurQ</fullName>
        <ecNumber evidence="1">3.5.1.2</ecNumber>
    </alternativeName>
    <alternativeName>
        <fullName evidence="1">Phosphoribosylformylglycinamidine synthase subunit I</fullName>
    </alternativeName>
</protein>
<name>PURQ_SYNSC</name>
<sequence>MSIGVIVFPGSNCDRDVQWATDGCLGMSTRRVWHEETDLSGFDAIILPGGFSYGDYLRCGAIARFAPALQSLIDFAAKGGRVLGICNGFQVLTELGLLPGALTRNQNLHFICEDAPLKVVSQRTAWMQGYNDRALTLPIAHGEGRYQCSDDTLKQLQDDDAIALSYGNNPNGSVFNIAGITNASGSVLGLMPHPERACDPAIGGTDGRRMLEALLG</sequence>
<evidence type="ECO:0000255" key="1">
    <source>
        <dbReference type="HAMAP-Rule" id="MF_00421"/>
    </source>
</evidence>
<comment type="function">
    <text evidence="1">Part of the phosphoribosylformylglycinamidine synthase complex involved in the purines biosynthetic pathway. Catalyzes the ATP-dependent conversion of formylglycinamide ribonucleotide (FGAR) and glutamine to yield formylglycinamidine ribonucleotide (FGAM) and glutamate. The FGAM synthase complex is composed of three subunits. PurQ produces an ammonia molecule by converting glutamine to glutamate. PurL transfers the ammonia molecule to FGAR to form FGAM in an ATP-dependent manner. PurS interacts with PurQ and PurL and is thought to assist in the transfer of the ammonia molecule from PurQ to PurL.</text>
</comment>
<comment type="catalytic activity">
    <reaction evidence="1">
        <text>N(2)-formyl-N(1)-(5-phospho-beta-D-ribosyl)glycinamide + L-glutamine + ATP + H2O = 2-formamido-N(1)-(5-O-phospho-beta-D-ribosyl)acetamidine + L-glutamate + ADP + phosphate + H(+)</text>
        <dbReference type="Rhea" id="RHEA:17129"/>
        <dbReference type="ChEBI" id="CHEBI:15377"/>
        <dbReference type="ChEBI" id="CHEBI:15378"/>
        <dbReference type="ChEBI" id="CHEBI:29985"/>
        <dbReference type="ChEBI" id="CHEBI:30616"/>
        <dbReference type="ChEBI" id="CHEBI:43474"/>
        <dbReference type="ChEBI" id="CHEBI:58359"/>
        <dbReference type="ChEBI" id="CHEBI:147286"/>
        <dbReference type="ChEBI" id="CHEBI:147287"/>
        <dbReference type="ChEBI" id="CHEBI:456216"/>
        <dbReference type="EC" id="6.3.5.3"/>
    </reaction>
</comment>
<comment type="catalytic activity">
    <reaction evidence="1">
        <text>L-glutamine + H2O = L-glutamate + NH4(+)</text>
        <dbReference type="Rhea" id="RHEA:15889"/>
        <dbReference type="ChEBI" id="CHEBI:15377"/>
        <dbReference type="ChEBI" id="CHEBI:28938"/>
        <dbReference type="ChEBI" id="CHEBI:29985"/>
        <dbReference type="ChEBI" id="CHEBI:58359"/>
        <dbReference type="EC" id="3.5.1.2"/>
    </reaction>
</comment>
<comment type="pathway">
    <text evidence="1">Purine metabolism; IMP biosynthesis via de novo pathway; 5-amino-1-(5-phospho-D-ribosyl)imidazole from N(2)-formyl-N(1)-(5-phospho-D-ribosyl)glycinamide: step 1/2.</text>
</comment>
<comment type="subunit">
    <text evidence="1">Part of the FGAM synthase complex composed of 1 PurL, 1 PurQ and 2 PurS subunits.</text>
</comment>
<comment type="subcellular location">
    <subcellularLocation>
        <location evidence="1">Cytoplasm</location>
    </subcellularLocation>
</comment>
<feature type="chain" id="PRO_0000252737" description="Phosphoribosylformylglycinamidine synthase subunit PurQ">
    <location>
        <begin position="1"/>
        <end position="216"/>
    </location>
</feature>
<feature type="domain" description="Glutamine amidotransferase type-1" evidence="1">
    <location>
        <begin position="2"/>
        <end position="216"/>
    </location>
</feature>
<feature type="active site" description="Nucleophile" evidence="1">
    <location>
        <position position="86"/>
    </location>
</feature>
<feature type="active site" evidence="1">
    <location>
        <position position="193"/>
    </location>
</feature>
<feature type="active site" evidence="1">
    <location>
        <position position="195"/>
    </location>
</feature>
<organism>
    <name type="scientific">Synechococcus sp. (strain CC9605)</name>
    <dbReference type="NCBI Taxonomy" id="110662"/>
    <lineage>
        <taxon>Bacteria</taxon>
        <taxon>Bacillati</taxon>
        <taxon>Cyanobacteriota</taxon>
        <taxon>Cyanophyceae</taxon>
        <taxon>Synechococcales</taxon>
        <taxon>Synechococcaceae</taxon>
        <taxon>Synechococcus</taxon>
    </lineage>
</organism>